<feature type="chain" id="PRO_0000247737" description="Forkhead box protein N5">
    <location>
        <begin position="1"/>
        <end position="295"/>
    </location>
</feature>
<feature type="DNA-binding region" description="Fork-head" evidence="1">
    <location>
        <begin position="178"/>
        <end position="275"/>
    </location>
</feature>
<feature type="region of interest" description="Disordered" evidence="2">
    <location>
        <begin position="119"/>
        <end position="146"/>
    </location>
</feature>
<comment type="subcellular location">
    <subcellularLocation>
        <location evidence="4">Nucleus</location>
    </subcellularLocation>
</comment>
<comment type="tissue specificity">
    <text evidence="3">Ubiquitously expressed in early cleavage stage and gastrula stage embryos.</text>
</comment>
<comment type="developmental stage">
    <text evidence="3">Expressed maternally. Expression levels decrease from gastrulation until the onset of neurulation (stage 15), when expression is absent.</text>
</comment>
<keyword id="KW-0238">DNA-binding</keyword>
<keyword id="KW-0539">Nucleus</keyword>
<keyword id="KW-1185">Reference proteome</keyword>
<keyword id="KW-0804">Transcription</keyword>
<keyword id="KW-0805">Transcription regulation</keyword>
<protein>
    <recommendedName>
        <fullName>Forkhead box protein N5</fullName>
    </recommendedName>
</protein>
<name>FOXN5_XENLA</name>
<reference evidence="4 5" key="1">
    <citation type="journal article" date="2006" name="Int. J. Dev. Biol.">
        <title>Temporal and spatial expression patterns of FoxN genes in Xenopus laevis embryos.</title>
        <authorList>
            <person name="Schuff M."/>
            <person name="Roessner A."/>
            <person name="Donow C."/>
            <person name="Knoechel W."/>
        </authorList>
    </citation>
    <scope>NUCLEOTIDE SEQUENCE [MRNA]</scope>
    <scope>TISSUE SPECIFICITY</scope>
    <scope>DEVELOPMENTAL STAGE</scope>
    <source>
        <tissue evidence="3">Gastrula</tissue>
    </source>
</reference>
<accession>Q3BJS0</accession>
<dbReference type="EMBL" id="AM114797">
    <property type="protein sequence ID" value="CAJ38822.1"/>
    <property type="molecule type" value="mRNA"/>
</dbReference>
<dbReference type="RefSeq" id="NP_001089122.1">
    <property type="nucleotide sequence ID" value="NM_001095653.1"/>
</dbReference>
<dbReference type="SMR" id="Q3BJS0"/>
<dbReference type="GeneID" id="733406"/>
<dbReference type="KEGG" id="xla:733406"/>
<dbReference type="AGR" id="Xenbase:XB-GENE-865022"/>
<dbReference type="CTD" id="733406"/>
<dbReference type="Xenbase" id="XB-GENE-865022">
    <property type="gene designation" value="foxr1.L"/>
</dbReference>
<dbReference type="OrthoDB" id="10070006at2759"/>
<dbReference type="Proteomes" id="UP000186698">
    <property type="component" value="Chromosome 7L"/>
</dbReference>
<dbReference type="Bgee" id="733406">
    <property type="expression patterns" value="Expressed in ovary and 6 other cell types or tissues"/>
</dbReference>
<dbReference type="GO" id="GO:0005634">
    <property type="term" value="C:nucleus"/>
    <property type="evidence" value="ECO:0000318"/>
    <property type="project" value="GO_Central"/>
</dbReference>
<dbReference type="GO" id="GO:0003700">
    <property type="term" value="F:DNA-binding transcription factor activity"/>
    <property type="evidence" value="ECO:0007669"/>
    <property type="project" value="InterPro"/>
</dbReference>
<dbReference type="GO" id="GO:1990837">
    <property type="term" value="F:sequence-specific double-stranded DNA binding"/>
    <property type="evidence" value="ECO:0000318"/>
    <property type="project" value="GO_Central"/>
</dbReference>
<dbReference type="CDD" id="cd20036">
    <property type="entry name" value="FH_FOXR"/>
    <property type="match status" value="1"/>
</dbReference>
<dbReference type="Gene3D" id="1.10.10.10">
    <property type="entry name" value="Winged helix-like DNA-binding domain superfamily/Winged helix DNA-binding domain"/>
    <property type="match status" value="1"/>
</dbReference>
<dbReference type="InterPro" id="IPR001766">
    <property type="entry name" value="Fork_head_dom"/>
</dbReference>
<dbReference type="InterPro" id="IPR052328">
    <property type="entry name" value="FOX_transcription_regulators"/>
</dbReference>
<dbReference type="InterPro" id="IPR036388">
    <property type="entry name" value="WH-like_DNA-bd_sf"/>
</dbReference>
<dbReference type="InterPro" id="IPR036390">
    <property type="entry name" value="WH_DNA-bd_sf"/>
</dbReference>
<dbReference type="PANTHER" id="PTHR46789">
    <property type="entry name" value="FORKHEAD BOX PROTEIN R1"/>
    <property type="match status" value="1"/>
</dbReference>
<dbReference type="PANTHER" id="PTHR46789:SF2">
    <property type="entry name" value="FORKHEAD BOX PROTEIN R2"/>
    <property type="match status" value="1"/>
</dbReference>
<dbReference type="Pfam" id="PF00250">
    <property type="entry name" value="Forkhead"/>
    <property type="match status" value="1"/>
</dbReference>
<dbReference type="PRINTS" id="PR00053">
    <property type="entry name" value="FORKHEAD"/>
</dbReference>
<dbReference type="SMART" id="SM00339">
    <property type="entry name" value="FH"/>
    <property type="match status" value="1"/>
</dbReference>
<dbReference type="SUPFAM" id="SSF46785">
    <property type="entry name" value="Winged helix' DNA-binding domain"/>
    <property type="match status" value="1"/>
</dbReference>
<dbReference type="PROSITE" id="PS50039">
    <property type="entry name" value="FORK_HEAD_3"/>
    <property type="match status" value="1"/>
</dbReference>
<proteinExistence type="evidence at transcript level"/>
<gene>
    <name evidence="5" type="primary">foxn5</name>
</gene>
<sequence>MYLRFANRKPYEKLHLSTALEDWDMSEELKLSITADQYFAGADDKVERYTLRRQHSTELSPTRSEEGDFQECKFRPSLWLVVDPNLVIPCPEWINRIPPAPELTSPPLQLQRQLSVEYSTVEDSEDEAPTSCSDLMTDDDNDDSYNPCQPKNKHKRAKCLGKKMRVQKGLTELESWARPPLNYCNLISLALRNSEDGCLNVQQIYSFVRDHFPFFRIAPDGWKNTVRHNLCFSSSFEKSSGWVCADGHRRSCLWKLTRQGRRKFRNEMHALSDDLLHVLRRSMKKPALMELMFGM</sequence>
<organism>
    <name type="scientific">Xenopus laevis</name>
    <name type="common">African clawed frog</name>
    <dbReference type="NCBI Taxonomy" id="8355"/>
    <lineage>
        <taxon>Eukaryota</taxon>
        <taxon>Metazoa</taxon>
        <taxon>Chordata</taxon>
        <taxon>Craniata</taxon>
        <taxon>Vertebrata</taxon>
        <taxon>Euteleostomi</taxon>
        <taxon>Amphibia</taxon>
        <taxon>Batrachia</taxon>
        <taxon>Anura</taxon>
        <taxon>Pipoidea</taxon>
        <taxon>Pipidae</taxon>
        <taxon>Xenopodinae</taxon>
        <taxon>Xenopus</taxon>
        <taxon>Xenopus</taxon>
    </lineage>
</organism>
<evidence type="ECO:0000255" key="1">
    <source>
        <dbReference type="PROSITE-ProRule" id="PRU00089"/>
    </source>
</evidence>
<evidence type="ECO:0000256" key="2">
    <source>
        <dbReference type="SAM" id="MobiDB-lite"/>
    </source>
</evidence>
<evidence type="ECO:0000269" key="3">
    <source>
    </source>
</evidence>
<evidence type="ECO:0000305" key="4"/>
<evidence type="ECO:0000312" key="5">
    <source>
        <dbReference type="EMBL" id="CAJ38822.1"/>
    </source>
</evidence>